<proteinExistence type="evidence at protein level"/>
<organism>
    <name type="scientific">Human coronavirus HKU1 (isolate N1)</name>
    <name type="common">HCoV-HKU1</name>
    <dbReference type="NCBI Taxonomy" id="443239"/>
    <lineage>
        <taxon>Viruses</taxon>
        <taxon>Riboviria</taxon>
        <taxon>Orthornavirae</taxon>
        <taxon>Pisuviricota</taxon>
        <taxon>Pisoniviricetes</taxon>
        <taxon>Nidovirales</taxon>
        <taxon>Cornidovirineae</taxon>
        <taxon>Coronaviridae</taxon>
        <taxon>Orthocoronavirinae</taxon>
        <taxon>Betacoronavirus</taxon>
        <taxon>Embecovirus</taxon>
        <taxon>Human coronavirus HKU1</taxon>
    </lineage>
</organism>
<reference key="1">
    <citation type="journal article" date="2005" name="J. Virol.">
        <title>Characterization and complete genome sequence of a novel coronavirus, coronavirus HKU1, from patients with pneumonia.</title>
        <authorList>
            <person name="Woo P.C.Y."/>
            <person name="Lau S.K.P."/>
            <person name="Chu C.-M."/>
            <person name="Chan K.-H."/>
            <person name="Tsoi H.-W."/>
            <person name="Huang Y."/>
            <person name="Wong B.H.L."/>
            <person name="Poon R.W.S."/>
            <person name="Cai J.J."/>
            <person name="Luk W.-K."/>
            <person name="Poon L.L.M."/>
            <person name="Wong S.S.Y."/>
            <person name="Guan Y."/>
            <person name="Peiris J.S.M."/>
            <person name="Yuen K.-Y."/>
        </authorList>
    </citation>
    <scope>NUCLEOTIDE SEQUENCE [GENOMIC RNA]</scope>
</reference>
<protein>
    <recommendedName>
        <fullName evidence="2">Spike glycoprotein</fullName>
        <shortName evidence="2">S glycoprotein</shortName>
    </recommendedName>
    <alternativeName>
        <fullName evidence="2">E2</fullName>
    </alternativeName>
    <alternativeName>
        <fullName evidence="2">Peplomer protein</fullName>
    </alternativeName>
    <component>
        <recommendedName>
            <fullName evidence="2">Spike protein S1</fullName>
        </recommendedName>
    </component>
    <component>
        <recommendedName>
            <fullName evidence="2">Spike protein S2</fullName>
        </recommendedName>
    </component>
    <component>
        <recommendedName>
            <fullName evidence="2">Spike protein S2'</fullName>
        </recommendedName>
    </component>
</protein>
<gene>
    <name evidence="2" type="primary">S</name>
    <name type="ORF">3</name>
</gene>
<dbReference type="EMBL" id="AY597011">
    <property type="protein sequence ID" value="AAT98580.1"/>
    <property type="molecule type" value="Genomic_RNA"/>
</dbReference>
<dbReference type="RefSeq" id="YP_173238.1">
    <property type="nucleotide sequence ID" value="NC_006577.2"/>
</dbReference>
<dbReference type="PDB" id="5GNB">
    <property type="method" value="X-ray"/>
    <property type="resolution" value="2.30 A"/>
    <property type="chains" value="A=307-677"/>
</dbReference>
<dbReference type="PDB" id="5KWB">
    <property type="method" value="X-ray"/>
    <property type="resolution" value="1.91 A"/>
    <property type="chains" value="A=307-677"/>
</dbReference>
<dbReference type="PDB" id="7EJN">
    <property type="method" value="X-ray"/>
    <property type="resolution" value="2.11 A"/>
    <property type="chains" value="C=1295-1303"/>
</dbReference>
<dbReference type="PDB" id="8DGW">
    <property type="method" value="X-ray"/>
    <property type="resolution" value="2.81 A"/>
    <property type="chains" value="G/I/J/K=1226-1250"/>
</dbReference>
<dbReference type="PDB" id="8VGT">
    <property type="method" value="EM"/>
    <property type="resolution" value="2.90 A"/>
    <property type="chains" value="A=320-614"/>
</dbReference>
<dbReference type="PDB" id="8Y7X">
    <property type="method" value="EM"/>
    <property type="resolution" value="3.09 A"/>
    <property type="chains" value="A/B/C=14-1281"/>
</dbReference>
<dbReference type="PDB" id="8Y7Y">
    <property type="method" value="EM"/>
    <property type="resolution" value="3.24 A"/>
    <property type="chains" value="A/B=14-1281"/>
</dbReference>
<dbReference type="PDB" id="8YOY">
    <property type="method" value="EM"/>
    <property type="resolution" value="3.21 A"/>
    <property type="chains" value="A=307-677"/>
</dbReference>
<dbReference type="PDB" id="9IZN">
    <property type="method" value="X-ray"/>
    <property type="resolution" value="2.40 A"/>
    <property type="chains" value="A=307-677"/>
</dbReference>
<dbReference type="PDBsum" id="5GNB"/>
<dbReference type="PDBsum" id="5KWB"/>
<dbReference type="PDBsum" id="7EJN"/>
<dbReference type="PDBsum" id="8DGW"/>
<dbReference type="PDBsum" id="8VGT"/>
<dbReference type="PDBsum" id="8Y7X"/>
<dbReference type="PDBsum" id="8Y7Y"/>
<dbReference type="PDBsum" id="8YOY"/>
<dbReference type="PDBsum" id="9IZN"/>
<dbReference type="EMDB" id="EMD-39025"/>
<dbReference type="EMDB" id="EMD-39026"/>
<dbReference type="EMDB" id="EMD-39460"/>
<dbReference type="EMDB" id="EMD-43224"/>
<dbReference type="SMR" id="Q5MQD0"/>
<dbReference type="UniLectin" id="Q5MQD0"/>
<dbReference type="GlyCosmos" id="Q5MQD0">
    <property type="glycosylation" value="28 sites, No reported glycans"/>
</dbReference>
<dbReference type="GeneID" id="3200426"/>
<dbReference type="KEGG" id="vg:3200426"/>
<dbReference type="Proteomes" id="UP000008170">
    <property type="component" value="Segment"/>
</dbReference>
<dbReference type="GO" id="GO:0044173">
    <property type="term" value="C:host cell endoplasmic reticulum-Golgi intermediate compartment membrane"/>
    <property type="evidence" value="ECO:0007669"/>
    <property type="project" value="UniProtKB-SubCell"/>
</dbReference>
<dbReference type="GO" id="GO:0020002">
    <property type="term" value="C:host cell plasma membrane"/>
    <property type="evidence" value="ECO:0007669"/>
    <property type="project" value="UniProtKB-SubCell"/>
</dbReference>
<dbReference type="GO" id="GO:0016020">
    <property type="term" value="C:membrane"/>
    <property type="evidence" value="ECO:0007669"/>
    <property type="project" value="UniProtKB-UniRule"/>
</dbReference>
<dbReference type="GO" id="GO:0019031">
    <property type="term" value="C:viral envelope"/>
    <property type="evidence" value="ECO:0007669"/>
    <property type="project" value="UniProtKB-UniRule"/>
</dbReference>
<dbReference type="GO" id="GO:0055036">
    <property type="term" value="C:virion membrane"/>
    <property type="evidence" value="ECO:0007669"/>
    <property type="project" value="UniProtKB-SubCell"/>
</dbReference>
<dbReference type="GO" id="GO:0075509">
    <property type="term" value="P:endocytosis involved in viral entry into host cell"/>
    <property type="evidence" value="ECO:0007669"/>
    <property type="project" value="UniProtKB-UniRule"/>
</dbReference>
<dbReference type="GO" id="GO:0039654">
    <property type="term" value="P:fusion of virus membrane with host endosome membrane"/>
    <property type="evidence" value="ECO:0007669"/>
    <property type="project" value="UniProtKB-UniRule"/>
</dbReference>
<dbReference type="GO" id="GO:0019064">
    <property type="term" value="P:fusion of virus membrane with host plasma membrane"/>
    <property type="evidence" value="ECO:0007669"/>
    <property type="project" value="UniProtKB-UniRule"/>
</dbReference>
<dbReference type="GO" id="GO:0046813">
    <property type="term" value="P:receptor-mediated virion attachment to host cell"/>
    <property type="evidence" value="ECO:0007669"/>
    <property type="project" value="UniProtKB-UniRule"/>
</dbReference>
<dbReference type="CDD" id="cd22380">
    <property type="entry name" value="HKU1-CoV-like_Spike_SD1-2_S1-S2_S2"/>
    <property type="match status" value="1"/>
</dbReference>
<dbReference type="CDD" id="cd21483">
    <property type="entry name" value="HKU1_N1_CoV_Spike_S1_RBD"/>
    <property type="match status" value="1"/>
</dbReference>
<dbReference type="CDD" id="cd21625">
    <property type="entry name" value="MHV-like_Spike_S1_NTD"/>
    <property type="match status" value="1"/>
</dbReference>
<dbReference type="FunFam" id="1.20.5.300:FF:000003">
    <property type="entry name" value="Spike glycoprotein"/>
    <property type="match status" value="1"/>
</dbReference>
<dbReference type="FunFam" id="1.20.5.300:FF:000006">
    <property type="entry name" value="Spike glycoprotein"/>
    <property type="match status" value="1"/>
</dbReference>
<dbReference type="FunFam" id="2.60.120.960:FF:000002">
    <property type="entry name" value="Spike glycoprotein"/>
    <property type="match status" value="1"/>
</dbReference>
<dbReference type="Gene3D" id="1.20.5.300">
    <property type="match status" value="2"/>
</dbReference>
<dbReference type="Gene3D" id="3.30.70.1840">
    <property type="match status" value="1"/>
</dbReference>
<dbReference type="Gene3D" id="2.60.120.960">
    <property type="entry name" value="Spike glycoprotein, N-terminal domain"/>
    <property type="match status" value="1"/>
</dbReference>
<dbReference type="HAMAP" id="MF_04099">
    <property type="entry name" value="BETA_CORONA_SPIKE"/>
    <property type="match status" value="1"/>
</dbReference>
<dbReference type="InterPro" id="IPR032500">
    <property type="entry name" value="bCoV_S1_N"/>
</dbReference>
<dbReference type="InterPro" id="IPR042578">
    <property type="entry name" value="BETA_CORONA_SPIKE"/>
</dbReference>
<dbReference type="InterPro" id="IPR043607">
    <property type="entry name" value="CoV_S1_C"/>
</dbReference>
<dbReference type="InterPro" id="IPR043473">
    <property type="entry name" value="S2_sf_CoV"/>
</dbReference>
<dbReference type="InterPro" id="IPR043002">
    <property type="entry name" value="Spike_N_sf"/>
</dbReference>
<dbReference type="InterPro" id="IPR044339">
    <property type="entry name" value="Spike_S1_NTD_MHV-like"/>
</dbReference>
<dbReference type="InterPro" id="IPR018548">
    <property type="entry name" value="Spike_S1_RBD_bCoV"/>
</dbReference>
<dbReference type="InterPro" id="IPR036326">
    <property type="entry name" value="Spike_S1_RBD_sf_bCoV"/>
</dbReference>
<dbReference type="InterPro" id="IPR002552">
    <property type="entry name" value="Spike_S2_CoV"/>
</dbReference>
<dbReference type="InterPro" id="IPR043614">
    <property type="entry name" value="Spike_S2_CoV_C"/>
</dbReference>
<dbReference type="InterPro" id="IPR044873">
    <property type="entry name" value="Spike_S2_CoV_HR1"/>
</dbReference>
<dbReference type="InterPro" id="IPR044874">
    <property type="entry name" value="Spike_S2_CoV_HR2"/>
</dbReference>
<dbReference type="Pfam" id="PF16451">
    <property type="entry name" value="bCoV_S1_N"/>
    <property type="match status" value="1"/>
</dbReference>
<dbReference type="Pfam" id="PF09408">
    <property type="entry name" value="bCoV_S1_RBD"/>
    <property type="match status" value="1"/>
</dbReference>
<dbReference type="Pfam" id="PF19209">
    <property type="entry name" value="CoV_S1_C"/>
    <property type="match status" value="1"/>
</dbReference>
<dbReference type="Pfam" id="PF01601">
    <property type="entry name" value="CoV_S2"/>
    <property type="match status" value="1"/>
</dbReference>
<dbReference type="Pfam" id="PF19214">
    <property type="entry name" value="CoV_S2_C"/>
    <property type="match status" value="1"/>
</dbReference>
<dbReference type="SUPFAM" id="SSF111474">
    <property type="entry name" value="Coronavirus S2 glycoprotein"/>
    <property type="match status" value="2"/>
</dbReference>
<dbReference type="SUPFAM" id="SSF143587">
    <property type="entry name" value="SARS receptor-binding domain-like"/>
    <property type="match status" value="1"/>
</dbReference>
<dbReference type="PROSITE" id="PS51921">
    <property type="entry name" value="BCOV_S1_CTD"/>
    <property type="match status" value="1"/>
</dbReference>
<dbReference type="PROSITE" id="PS51922">
    <property type="entry name" value="BCOV_S1_NTD"/>
    <property type="match status" value="1"/>
</dbReference>
<dbReference type="PROSITE" id="PS51923">
    <property type="entry name" value="COV_S2_HR1"/>
    <property type="match status" value="1"/>
</dbReference>
<dbReference type="PROSITE" id="PS51924">
    <property type="entry name" value="COV_S2_HR2"/>
    <property type="match status" value="1"/>
</dbReference>
<organismHost>
    <name type="scientific">Homo sapiens</name>
    <name type="common">Human</name>
    <dbReference type="NCBI Taxonomy" id="9606"/>
</organismHost>
<evidence type="ECO:0000250" key="1"/>
<evidence type="ECO:0000255" key="2">
    <source>
        <dbReference type="HAMAP-Rule" id="MF_04099"/>
    </source>
</evidence>
<evidence type="ECO:0000255" key="3">
    <source>
        <dbReference type="PROSITE-ProRule" id="PRU01269"/>
    </source>
</evidence>
<evidence type="ECO:0000255" key="4">
    <source>
        <dbReference type="PROSITE-ProRule" id="PRU01270"/>
    </source>
</evidence>
<evidence type="ECO:0007829" key="5">
    <source>
        <dbReference type="PDB" id="5KWB"/>
    </source>
</evidence>
<evidence type="ECO:0007829" key="6">
    <source>
        <dbReference type="PDB" id="8DGW"/>
    </source>
</evidence>
<evidence type="ECO:0007829" key="7">
    <source>
        <dbReference type="PDB" id="8VGT"/>
    </source>
</evidence>
<evidence type="ECO:0007829" key="8">
    <source>
        <dbReference type="PDB" id="8Y7X"/>
    </source>
</evidence>
<evidence type="ECO:0007829" key="9">
    <source>
        <dbReference type="PDB" id="8YOY"/>
    </source>
</evidence>
<sequence length="1356" mass="151711">MLLIIFILPTTLAVIGDFNCTNFAINDLNTTVPRISEYVVDVSYGLGTYYILDRVYLNTTILFTGYFPKSGANFRDLSLKGTTYLSTLWYQKPFLSDFNNGIFSRVKNTKLYVNKTLYSEFSTIVIGSVFINNSYTIVVQPHNGVLEITACQYTMCEYPHTICKSKGSSRNESWHFDKSEPLCLFKKNFTYNVSTDWLYFHFYQERGTFYAYYADSGMPTTFLFSLYLGTLLSHYYVLPLTCNAISSNTDNETLQYWVTPLSKRQYLLKFDNRGVITNAVDCSSSFFSEIQCKTKSLLPNTGVYDLSGFTVKPVATVHRRIPDLPDCDIDKWLNNFNVPSPLNWERKIFSNCNFNLSTLLRLVHTDSFSCNNFDESKIYGSCFKSIVLDKFAIPNSRRSDLQLGSSGFLQSSNYKIDTTSSSCQLYYSLPAINVTINNYNPSSWNRRYGFNNFNLSSHSVVYSRYCFSVNNTFCPCAKPSFASSCKSHKPPSASCPIGTNYRSCESTTVLDHTDWCRCSCLPDPITAYDPRSCSQKKSLVGVGEHCAGFGVDEEKCGVLDGSYNVSCLCSTDAFLGWSYDTCVSNNRCNIFSNFILNGINSGTTCSNDLLQPNTEVFTDVCVDYDLYGITGQGIFKEVSAVYYNSWQNLLYDSNGNIIGFKDFVTNKTYNIFPCYAGRVSAAFHQNASSLALLYRNLKCSYVLNNISLTTQPYFDSYLGCVFNADNLTDYSVSSCALRMGSGFCVDYNSPSSSSSRRKRRSISASYRFVTFEPFNVSFVNDSIESVGGLYEIKIPTNFTIVGQEEFIQTNSPKVTIDCSLFVCSNYAACHDLLSEYGTFCDNINSILDEVNGLLDTTQLHVADTLMQGVTLSSNLNTNLHFDVDNINFKSLVGCLGPHCGSSSRSFFEDLLFDKVKLSDVGFVEAYNNCTGGSEIRDLLCVQSFNGIKVLPPILSESQISGYTTAATVAAMFPPWSAAAGIPFSLNVQYRINGLGVTMDVLNKNQKLIATAFNNALLSIQNGFSATNSALAKIQSVVNSNAQALNSLLQQLFNKFGAISSSLQEILSRLDALEAQVQIDRLINGRLTALNAYVSQQLSDISLVKFGAALAMEKVNECVKSQSPRINFCGNGNHILSLVQNAPYGLLFMHFSYKPISFKTVLVSPGLCISGDVGIAPKQGYFIKHNDHWMFTGSSYYYPEPISDKNVVFMNTCSVNFTKAPLVYLNHSVPKLSDFESELSHWFKNQTSIAPNLTLNLHTINATFLDLYYEMNLIQESIKSLNNSYINLKDIGTYEMYVKWPWYVWLLISFSFIIFLVLLFFICCCTGCGSACFSKCHNCCDEYGGHHDFVIKTSHDD</sequence>
<feature type="signal peptide" evidence="2">
    <location>
        <begin position="1"/>
        <end position="12"/>
    </location>
</feature>
<feature type="chain" id="PRO_0000297803" description="Spike glycoprotein">
    <location>
        <begin position="13"/>
        <end position="1356"/>
    </location>
</feature>
<feature type="chain" id="PRO_0000297804" description="Spike protein S1" evidence="1">
    <location>
        <begin position="13"/>
        <end position="760"/>
    </location>
</feature>
<feature type="chain" id="PRO_0000297805" description="Spike protein S2" evidence="1">
    <location>
        <begin position="761"/>
        <end position="1356"/>
    </location>
</feature>
<feature type="chain" id="PRO_0000444078" description="Spike protein S2'" evidence="2">
    <location>
        <begin position="905"/>
        <end position="1356"/>
    </location>
</feature>
<feature type="topological domain" description="Extracellular" evidence="2">
    <location>
        <begin position="13"/>
        <end position="1300"/>
    </location>
</feature>
<feature type="transmembrane region" description="Helical" evidence="2">
    <location>
        <begin position="1301"/>
        <end position="1321"/>
    </location>
</feature>
<feature type="topological domain" description="Cytoplasmic" evidence="2">
    <location>
        <begin position="1322"/>
        <end position="1356"/>
    </location>
</feature>
<feature type="domain" description="BetaCoV S1-NTD" evidence="4">
    <location>
        <begin position="14"/>
        <end position="294"/>
    </location>
</feature>
<feature type="domain" description="BetaCoV S1-CTD" evidence="3">
    <location>
        <begin position="325"/>
        <end position="607"/>
    </location>
</feature>
<feature type="region of interest" description="Fusion peptide 1" evidence="2">
    <location>
        <begin position="905"/>
        <end position="926"/>
    </location>
</feature>
<feature type="region of interest" description="Fusion peptide 2" evidence="2">
    <location>
        <begin position="924"/>
        <end position="944"/>
    </location>
</feature>
<feature type="region of interest" description="Heptad repeat 1" evidence="2">
    <location>
        <begin position="1005"/>
        <end position="1055"/>
    </location>
</feature>
<feature type="region of interest" description="Heptad repeat 2" evidence="2">
    <location>
        <begin position="1249"/>
        <end position="1289"/>
    </location>
</feature>
<feature type="coiled-coil region" evidence="2">
    <location>
        <begin position="1034"/>
        <end position="1078"/>
    </location>
</feature>
<feature type="coiled-coil region" evidence="2">
    <location>
        <begin position="1262"/>
        <end position="1290"/>
    </location>
</feature>
<feature type="short sequence motif" description="KxHxx" evidence="2">
    <location>
        <begin position="1352"/>
        <end position="1356"/>
    </location>
</feature>
<feature type="site" description="Cleavage; by host" evidence="1">
    <location>
        <begin position="760"/>
        <end position="761"/>
    </location>
</feature>
<feature type="site" description="Cleavage" evidence="2">
    <location>
        <begin position="904"/>
        <end position="905"/>
    </location>
</feature>
<feature type="glycosylation site" description="N-linked (GlcNAc...) asparagine; by host" evidence="2">
    <location>
        <position position="19"/>
    </location>
</feature>
<feature type="glycosylation site" description="N-linked (GlcNAc...) asparagine; by host" evidence="2">
    <location>
        <position position="29"/>
    </location>
</feature>
<feature type="glycosylation site" description="N-linked (GlcNAc...) asparagine; by host" evidence="2">
    <location>
        <position position="58"/>
    </location>
</feature>
<feature type="glycosylation site" description="N-linked (GlcNAc...) asparagine; by host" evidence="2">
    <location>
        <position position="114"/>
    </location>
</feature>
<feature type="glycosylation site" description="N-linked (GlcNAc...) asparagine; by host" evidence="2">
    <location>
        <position position="132"/>
    </location>
</feature>
<feature type="glycosylation site" description="N-linked (GlcNAc...) asparagine; by host" evidence="2">
    <location>
        <position position="171"/>
    </location>
</feature>
<feature type="glycosylation site" description="N-linked (GlcNAc...) asparagine; by host" evidence="2">
    <location>
        <position position="188"/>
    </location>
</feature>
<feature type="glycosylation site" description="N-linked (GlcNAc...) asparagine; by host" evidence="2">
    <location>
        <position position="192"/>
    </location>
</feature>
<feature type="glycosylation site" description="N-linked (GlcNAc...) asparagine; by host" evidence="2">
    <location>
        <position position="251"/>
    </location>
</feature>
<feature type="glycosylation site" description="N-linked (GlcNAc...) asparagine; by host" evidence="2">
    <location>
        <position position="355"/>
    </location>
</feature>
<feature type="glycosylation site" description="N-linked (GlcNAc...) asparagine; by host" evidence="2">
    <location>
        <position position="433"/>
    </location>
</feature>
<feature type="glycosylation site" description="N-linked (GlcNAc...) asparagine; by host" evidence="2">
    <location>
        <position position="454"/>
    </location>
</feature>
<feature type="glycosylation site" description="N-linked (GlcNAc...) asparagine; by host" evidence="2">
    <location>
        <position position="470"/>
    </location>
</feature>
<feature type="glycosylation site" description="N-linked (GlcNAc...) asparagine; by host" evidence="2">
    <location>
        <position position="564"/>
    </location>
</feature>
<feature type="glycosylation site" description="N-linked (GlcNAc...) asparagine; by host" evidence="2">
    <location>
        <position position="666"/>
    </location>
</feature>
<feature type="glycosylation site" description="N-linked (GlcNAc...) asparagine; by host" evidence="2">
    <location>
        <position position="686"/>
    </location>
</feature>
<feature type="glycosylation site" description="N-linked (GlcNAc...) asparagine; by host" evidence="2">
    <location>
        <position position="705"/>
    </location>
</feature>
<feature type="glycosylation site" description="N-linked (GlcNAc...) asparagine; by host" evidence="2">
    <location>
        <position position="726"/>
    </location>
</feature>
<feature type="glycosylation site" description="N-linked (GlcNAc...) asparagine; by host" evidence="2">
    <location>
        <position position="775"/>
    </location>
</feature>
<feature type="glycosylation site" description="N-linked (GlcNAc...) asparagine; by host" evidence="2">
    <location>
        <position position="780"/>
    </location>
</feature>
<feature type="glycosylation site" description="N-linked (GlcNAc...) asparagine; by host" evidence="2">
    <location>
        <position position="797"/>
    </location>
</feature>
<feature type="glycosylation site" description="N-linked (GlcNAc...) asparagine; by host" evidence="2">
    <location>
        <position position="928"/>
    </location>
</feature>
<feature type="glycosylation site" description="N-linked (GlcNAc...) asparagine; by host" evidence="2">
    <location>
        <position position="1215"/>
    </location>
</feature>
<feature type="glycosylation site" description="N-linked (GlcNAc...) asparagine; by host" evidence="2">
    <location>
        <position position="1225"/>
    </location>
</feature>
<feature type="glycosylation site" description="N-linked (GlcNAc...) asparagine; by host" evidence="2">
    <location>
        <position position="1244"/>
    </location>
</feature>
<feature type="glycosylation site" description="N-linked (GlcNAc...) asparagine; by host" evidence="2">
    <location>
        <position position="1251"/>
    </location>
</feature>
<feature type="glycosylation site" description="N-linked (GlcNAc...) asparagine; by host" evidence="2">
    <location>
        <position position="1260"/>
    </location>
</feature>
<feature type="glycosylation site" description="N-linked (GlcNAc...) asparagine; by host" evidence="2">
    <location>
        <position position="1281"/>
    </location>
</feature>
<feature type="disulfide bond" evidence="4">
    <location>
        <begin position="20"/>
        <end position="156"/>
    </location>
</feature>
<feature type="disulfide bond" evidence="4">
    <location>
        <begin position="151"/>
        <end position="183"/>
    </location>
</feature>
<feature type="disulfide bond" evidence="4">
    <location>
        <begin position="163"/>
        <end position="242"/>
    </location>
</feature>
<feature type="disulfide bond" evidence="4">
    <location>
        <begin position="282"/>
        <end position="292"/>
    </location>
</feature>
<feature type="disulfide bond" evidence="3">
    <location>
        <begin position="327"/>
        <end position="352"/>
    </location>
</feature>
<feature type="disulfide bond" evidence="3">
    <location>
        <begin position="370"/>
        <end position="423"/>
    </location>
</feature>
<feature type="disulfide bond" evidence="3">
    <location>
        <begin position="382"/>
        <end position="605"/>
    </location>
</feature>
<feature type="disulfide bond" evidence="2">
    <location>
        <begin position="929"/>
        <end position="940"/>
    </location>
</feature>
<feature type="strand" evidence="8">
    <location>
        <begin position="43"/>
        <end position="45"/>
    </location>
</feature>
<feature type="strand" evidence="8">
    <location>
        <begin position="60"/>
        <end position="67"/>
    </location>
</feature>
<feature type="strand" evidence="8">
    <location>
        <begin position="80"/>
        <end position="83"/>
    </location>
</feature>
<feature type="helix" evidence="8">
    <location>
        <begin position="87"/>
        <end position="90"/>
    </location>
</feature>
<feature type="strand" evidence="8">
    <location>
        <begin position="94"/>
        <end position="97"/>
    </location>
</feature>
<feature type="strand" evidence="8">
    <location>
        <begin position="99"/>
        <end position="107"/>
    </location>
</feature>
<feature type="strand" evidence="8">
    <location>
        <begin position="109"/>
        <end position="115"/>
    </location>
</feature>
<feature type="strand" evidence="8">
    <location>
        <begin position="117"/>
        <end position="120"/>
    </location>
</feature>
<feature type="strand" evidence="8">
    <location>
        <begin position="124"/>
        <end position="129"/>
    </location>
</feature>
<feature type="strand" evidence="8">
    <location>
        <begin position="136"/>
        <end position="141"/>
    </location>
</feature>
<feature type="strand" evidence="8">
    <location>
        <begin position="143"/>
        <end position="148"/>
    </location>
</feature>
<feature type="strand" evidence="8">
    <location>
        <begin position="155"/>
        <end position="158"/>
    </location>
</feature>
<feature type="strand" evidence="8">
    <location>
        <begin position="188"/>
        <end position="190"/>
    </location>
</feature>
<feature type="strand" evidence="8">
    <location>
        <begin position="196"/>
        <end position="205"/>
    </location>
</feature>
<feature type="strand" evidence="8">
    <location>
        <begin position="208"/>
        <end position="218"/>
    </location>
</feature>
<feature type="strand" evidence="8">
    <location>
        <begin position="220"/>
        <end position="227"/>
    </location>
</feature>
<feature type="strand" evidence="8">
    <location>
        <begin position="234"/>
        <end position="236"/>
    </location>
</feature>
<feature type="strand" evidence="8">
    <location>
        <begin position="243"/>
        <end position="246"/>
    </location>
</feature>
<feature type="turn" evidence="8">
    <location>
        <begin position="247"/>
        <end position="249"/>
    </location>
</feature>
<feature type="strand" evidence="8">
    <location>
        <begin position="256"/>
        <end position="260"/>
    </location>
</feature>
<feature type="strand" evidence="8">
    <location>
        <begin position="262"/>
        <end position="270"/>
    </location>
</feature>
<feature type="strand" evidence="8">
    <location>
        <begin position="272"/>
        <end position="274"/>
    </location>
</feature>
<feature type="strand" evidence="8">
    <location>
        <begin position="276"/>
        <end position="280"/>
    </location>
</feature>
<feature type="strand" evidence="8">
    <location>
        <begin position="282"/>
        <end position="285"/>
    </location>
</feature>
<feature type="helix" evidence="8">
    <location>
        <begin position="286"/>
        <end position="294"/>
    </location>
</feature>
<feature type="strand" evidence="8">
    <location>
        <begin position="296"/>
        <end position="298"/>
    </location>
</feature>
<feature type="strand" evidence="8">
    <location>
        <begin position="301"/>
        <end position="305"/>
    </location>
</feature>
<feature type="strand" evidence="5">
    <location>
        <begin position="316"/>
        <end position="319"/>
    </location>
</feature>
<feature type="helix" evidence="5">
    <location>
        <begin position="329"/>
        <end position="333"/>
    </location>
</feature>
<feature type="strand" evidence="5">
    <location>
        <begin position="336"/>
        <end position="339"/>
    </location>
</feature>
<feature type="helix" evidence="5">
    <location>
        <begin position="341"/>
        <end position="343"/>
    </location>
</feature>
<feature type="strand" evidence="5">
    <location>
        <begin position="345"/>
        <end position="349"/>
    </location>
</feature>
<feature type="strand" evidence="5">
    <location>
        <begin position="351"/>
        <end position="354"/>
    </location>
</feature>
<feature type="helix" evidence="5">
    <location>
        <begin position="356"/>
        <end position="362"/>
    </location>
</feature>
<feature type="strand" evidence="5">
    <location>
        <begin position="364"/>
        <end position="373"/>
    </location>
</feature>
<feature type="helix" evidence="5">
    <location>
        <begin position="375"/>
        <end position="377"/>
    </location>
</feature>
<feature type="strand" evidence="8">
    <location>
        <begin position="379"/>
        <end position="381"/>
    </location>
</feature>
<feature type="strand" evidence="5">
    <location>
        <begin position="382"/>
        <end position="392"/>
    </location>
</feature>
<feature type="helix" evidence="5">
    <location>
        <begin position="395"/>
        <end position="401"/>
    </location>
</feature>
<feature type="strand" evidence="8">
    <location>
        <begin position="402"/>
        <end position="404"/>
    </location>
</feature>
<feature type="helix" evidence="5">
    <location>
        <begin position="408"/>
        <end position="412"/>
    </location>
</feature>
<feature type="strand" evidence="5">
    <location>
        <begin position="418"/>
        <end position="420"/>
    </location>
</feature>
<feature type="strand" evidence="5">
    <location>
        <begin position="422"/>
        <end position="430"/>
    </location>
</feature>
<feature type="helix" evidence="5">
    <location>
        <begin position="431"/>
        <end position="433"/>
    </location>
</feature>
<feature type="strand" evidence="5">
    <location>
        <begin position="435"/>
        <end position="437"/>
    </location>
</feature>
<feature type="helix" evidence="5">
    <location>
        <begin position="443"/>
        <end position="447"/>
    </location>
</feature>
<feature type="strand" evidence="5">
    <location>
        <begin position="459"/>
        <end position="464"/>
    </location>
</feature>
<feature type="strand" evidence="9">
    <location>
        <begin position="466"/>
        <end position="468"/>
    </location>
</feature>
<feature type="strand" evidence="9">
    <location>
        <begin position="475"/>
        <end position="477"/>
    </location>
</feature>
<feature type="helix" evidence="5">
    <location>
        <begin position="479"/>
        <end position="482"/>
    </location>
</feature>
<feature type="strand" evidence="7">
    <location>
        <begin position="486"/>
        <end position="488"/>
    </location>
</feature>
<feature type="strand" evidence="5">
    <location>
        <begin position="504"/>
        <end position="509"/>
    </location>
</feature>
<feature type="strand" evidence="5">
    <location>
        <begin position="512"/>
        <end position="520"/>
    </location>
</feature>
<feature type="turn" evidence="5">
    <location>
        <begin position="524"/>
        <end position="526"/>
    </location>
</feature>
<feature type="helix" evidence="5">
    <location>
        <begin position="530"/>
        <end position="532"/>
    </location>
</feature>
<feature type="strand" evidence="5">
    <location>
        <begin position="534"/>
        <end position="537"/>
    </location>
</feature>
<feature type="helix" evidence="5">
    <location>
        <begin position="553"/>
        <end position="555"/>
    </location>
</feature>
<feature type="strand" evidence="5">
    <location>
        <begin position="556"/>
        <end position="558"/>
    </location>
</feature>
<feature type="helix" evidence="5">
    <location>
        <begin position="571"/>
        <end position="573"/>
    </location>
</feature>
<feature type="strand" evidence="5">
    <location>
        <begin position="576"/>
        <end position="581"/>
    </location>
</feature>
<feature type="strand" evidence="5">
    <location>
        <begin position="587"/>
        <end position="598"/>
    </location>
</feature>
<feature type="strand" evidence="5">
    <location>
        <begin position="602"/>
        <end position="606"/>
    </location>
</feature>
<feature type="strand" evidence="8">
    <location>
        <begin position="608"/>
        <end position="610"/>
    </location>
</feature>
<feature type="strand" evidence="5">
    <location>
        <begin position="619"/>
        <end position="626"/>
    </location>
</feature>
<feature type="strand" evidence="5">
    <location>
        <begin position="629"/>
        <end position="638"/>
    </location>
</feature>
<feature type="helix" evidence="5">
    <location>
        <begin position="640"/>
        <end position="642"/>
    </location>
</feature>
<feature type="strand" evidence="5">
    <location>
        <begin position="646"/>
        <end position="651"/>
    </location>
</feature>
<feature type="strand" evidence="8">
    <location>
        <begin position="653"/>
        <end position="655"/>
    </location>
</feature>
<feature type="strand" evidence="5">
    <location>
        <begin position="657"/>
        <end position="661"/>
    </location>
</feature>
<feature type="turn" evidence="5">
    <location>
        <begin position="663"/>
        <end position="665"/>
    </location>
</feature>
<feature type="strand" evidence="5">
    <location>
        <begin position="668"/>
        <end position="672"/>
    </location>
</feature>
<feature type="strand" evidence="8">
    <location>
        <begin position="680"/>
        <end position="683"/>
    </location>
</feature>
<feature type="strand" evidence="8">
    <location>
        <begin position="691"/>
        <end position="695"/>
    </location>
</feature>
<feature type="helix" evidence="8">
    <location>
        <begin position="699"/>
        <end position="702"/>
    </location>
</feature>
<feature type="turn" evidence="8">
    <location>
        <begin position="703"/>
        <end position="706"/>
    </location>
</feature>
<feature type="strand" evidence="8">
    <location>
        <begin position="713"/>
        <end position="715"/>
    </location>
</feature>
<feature type="strand" evidence="8">
    <location>
        <begin position="717"/>
        <end position="723"/>
    </location>
</feature>
<feature type="strand" evidence="8">
    <location>
        <begin position="725"/>
        <end position="733"/>
    </location>
</feature>
<feature type="strand" evidence="8">
    <location>
        <begin position="740"/>
        <end position="747"/>
    </location>
</feature>
<feature type="strand" evidence="8">
    <location>
        <begin position="766"/>
        <end position="771"/>
    </location>
</feature>
<feature type="strand" evidence="8">
    <location>
        <begin position="777"/>
        <end position="779"/>
    </location>
</feature>
<feature type="strand" evidence="8">
    <location>
        <begin position="789"/>
        <end position="808"/>
    </location>
</feature>
<feature type="strand" evidence="8">
    <location>
        <begin position="813"/>
        <end position="816"/>
    </location>
</feature>
<feature type="helix" evidence="8">
    <location>
        <begin position="818"/>
        <end position="822"/>
    </location>
</feature>
<feature type="strand" evidence="8">
    <location>
        <begin position="823"/>
        <end position="825"/>
    </location>
</feature>
<feature type="helix" evidence="8">
    <location>
        <begin position="827"/>
        <end position="833"/>
    </location>
</feature>
<feature type="helix" evidence="8">
    <location>
        <begin position="839"/>
        <end position="864"/>
    </location>
</feature>
<feature type="strand" evidence="8">
    <location>
        <begin position="866"/>
        <end position="868"/>
    </location>
</feature>
<feature type="strand" evidence="8">
    <location>
        <begin position="870"/>
        <end position="874"/>
    </location>
</feature>
<feature type="turn" evidence="8">
    <location>
        <begin position="889"/>
        <end position="891"/>
    </location>
</feature>
<feature type="strand" evidence="8">
    <location>
        <begin position="896"/>
        <end position="898"/>
    </location>
</feature>
<feature type="helix" evidence="8">
    <location>
        <begin position="906"/>
        <end position="912"/>
    </location>
</feature>
<feature type="helix" evidence="8">
    <location>
        <begin position="919"/>
        <end position="926"/>
    </location>
</feature>
<feature type="turn" evidence="8">
    <location>
        <begin position="927"/>
        <end position="930"/>
    </location>
</feature>
<feature type="strand" evidence="8">
    <location>
        <begin position="931"/>
        <end position="933"/>
    </location>
</feature>
<feature type="helix" evidence="8">
    <location>
        <begin position="938"/>
        <end position="945"/>
    </location>
</feature>
<feature type="strand" evidence="8">
    <location>
        <begin position="947"/>
        <end position="950"/>
    </location>
</feature>
<feature type="helix" evidence="8">
    <location>
        <begin position="956"/>
        <end position="968"/>
    </location>
</feature>
<feature type="turn" evidence="8">
    <location>
        <begin position="969"/>
        <end position="971"/>
    </location>
</feature>
<feature type="strand" evidence="8">
    <location>
        <begin position="972"/>
        <end position="974"/>
    </location>
</feature>
<feature type="turn" evidence="8">
    <location>
        <begin position="976"/>
        <end position="979"/>
    </location>
</feature>
<feature type="helix" evidence="8">
    <location>
        <begin position="983"/>
        <end position="992"/>
    </location>
</feature>
<feature type="turn" evidence="8">
    <location>
        <begin position="993"/>
        <end position="995"/>
    </location>
</feature>
<feature type="helix" evidence="8">
    <location>
        <begin position="998"/>
        <end position="1001"/>
    </location>
</feature>
<feature type="helix" evidence="8">
    <location>
        <begin position="1005"/>
        <end position="1020"/>
    </location>
</feature>
<feature type="strand" evidence="8">
    <location>
        <begin position="1023"/>
        <end position="1026"/>
    </location>
</feature>
<feature type="helix" evidence="8">
    <location>
        <begin position="1028"/>
        <end position="1048"/>
    </location>
</feature>
<feature type="helix" evidence="8">
    <location>
        <begin position="1049"/>
        <end position="1052"/>
    </location>
</feature>
<feature type="helix" evidence="8">
    <location>
        <begin position="1062"/>
        <end position="1068"/>
    </location>
</feature>
<feature type="helix" evidence="8">
    <location>
        <begin position="1071"/>
        <end position="1117"/>
    </location>
</feature>
<feature type="strand" evidence="8">
    <location>
        <begin position="1127"/>
        <end position="1141"/>
    </location>
</feature>
<feature type="strand" evidence="8">
    <location>
        <begin position="1144"/>
        <end position="1164"/>
    </location>
</feature>
<feature type="strand" evidence="8">
    <location>
        <begin position="1169"/>
        <end position="1171"/>
    </location>
</feature>
<feature type="strand" evidence="8">
    <location>
        <begin position="1173"/>
        <end position="1175"/>
    </location>
</feature>
<feature type="strand" evidence="8">
    <location>
        <begin position="1177"/>
        <end position="1184"/>
    </location>
</feature>
<feature type="strand" evidence="8">
    <location>
        <begin position="1187"/>
        <end position="1195"/>
    </location>
</feature>
<feature type="helix" evidence="8">
    <location>
        <begin position="1203"/>
        <end position="1205"/>
    </location>
</feature>
<feature type="strand" evidence="8">
    <location>
        <begin position="1207"/>
        <end position="1211"/>
    </location>
</feature>
<feature type="strand" evidence="8">
    <location>
        <begin position="1216"/>
        <end position="1218"/>
    </location>
</feature>
<feature type="helix" evidence="6">
    <location>
        <begin position="1234"/>
        <end position="1241"/>
    </location>
</feature>
<accession>Q5MQD0</accession>
<comment type="function">
    <molecule>Spike protein S1</molecule>
    <text evidence="2">Attaches the virion to the cell membrane by interacting with host receptor, initiating the infection.</text>
</comment>
<comment type="function">
    <molecule>Spike protein S2</molecule>
    <text evidence="2">Mediates fusion of the virion and cellular membranes by acting as a class I viral fusion protein. Under the current model, the protein has at least three conformational states: pre-fusion native state, pre-hairpin intermediate state, and post-fusion hairpin state. During viral and target cell membrane fusion, the coiled coil regions (heptad repeats) assume a trimer-of-hairpins structure, positioning the fusion peptide in close proximity to the C-terminal region of the ectodomain. The formation of this structure appears to drive apposition and subsequent fusion of viral and target cell membranes.</text>
</comment>
<comment type="function">
    <molecule>Spike protein S2'</molecule>
    <text evidence="2">Acts as a viral fusion peptide which is unmasked following S2 cleavage occurring upon virus endocytosis.</text>
</comment>
<comment type="subunit">
    <text evidence="2">Homotrimer; each monomer consists of a S1 and a S2 subunit. The resulting peplomers protrude from the virus surface as spikes.</text>
</comment>
<comment type="subcellular location">
    <subcellularLocation>
        <location evidence="2">Virion membrane</location>
        <topology evidence="2">Single-pass type I membrane protein</topology>
    </subcellularLocation>
    <subcellularLocation>
        <location evidence="2">Host endoplasmic reticulum-Golgi intermediate compartment membrane</location>
        <topology evidence="2">Single-pass type I membrane protein</topology>
    </subcellularLocation>
    <subcellularLocation>
        <location evidence="2">Host cell membrane</location>
        <topology evidence="2">Single-pass type I membrane protein</topology>
    </subcellularLocation>
    <text evidence="2">Accumulates in the endoplasmic reticulum-Golgi intermediate compartment, where it participates in virus particle assembly. Some S oligomers are transported to the host plasma membrane, where they may mediate cell-cell fusion.</text>
</comment>
<comment type="domain">
    <text evidence="2">Fusion peptide 1 (FP1) and fusion peptide 2 (FP2) function cooperatively and have a membrane-ordering effect on lipid headgroups and shallow hydrophobic regions of target bilayers. They are considered as two domains of an extended, bipartite FP. The membrane-ordering activity is calcium-dependent and also dependent on correct folding, which is maintained by an internal disulfide bond in FP2.</text>
</comment>
<comment type="PTM">
    <text evidence="2">Specific enzymatic cleavages in vivo yield mature proteins. The precursor is processed into S1 and S2 by host cell furin or another cellular protease to yield the mature S1 and S2 proteins. Additionally, a second cleavage leads to the release of a fusion peptide after viral attachment to host cell receptor.</text>
</comment>
<comment type="PTM">
    <text evidence="2">The cytoplasmic Cys-rich domain is palmitoylated. Spike glycoprotein is digested within host endosomes.</text>
</comment>
<comment type="miscellaneous">
    <text>Isolate N1 belongs to genotype A.</text>
</comment>
<comment type="similarity">
    <text evidence="2">Belongs to the betacoronaviruses spike protein family.</text>
</comment>
<name>SPIKE_CVHN1</name>
<keyword id="KW-0002">3D-structure</keyword>
<keyword id="KW-0175">Coiled coil</keyword>
<keyword id="KW-1015">Disulfide bond</keyword>
<keyword id="KW-1170">Fusion of virus membrane with host endosomal membrane</keyword>
<keyword id="KW-1168">Fusion of virus membrane with host membrane</keyword>
<keyword id="KW-0325">Glycoprotein</keyword>
<keyword id="KW-1032">Host cell membrane</keyword>
<keyword id="KW-1043">Host membrane</keyword>
<keyword id="KW-0945">Host-virus interaction</keyword>
<keyword id="KW-0449">Lipoprotein</keyword>
<keyword id="KW-0472">Membrane</keyword>
<keyword id="KW-0564">Palmitate</keyword>
<keyword id="KW-0732">Signal</keyword>
<keyword id="KW-0812">Transmembrane</keyword>
<keyword id="KW-1133">Transmembrane helix</keyword>
<keyword id="KW-1161">Viral attachment to host cell</keyword>
<keyword id="KW-0261">Viral envelope protein</keyword>
<keyword id="KW-1162">Viral penetration into host cytoplasm</keyword>
<keyword id="KW-0946">Virion</keyword>
<keyword id="KW-0843">Virulence</keyword>
<keyword id="KW-1160">Virus entry into host cell</keyword>